<protein>
    <recommendedName>
        <fullName>Zinc finger protein 275</fullName>
    </recommendedName>
</protein>
<sequence length="429" mass="48443">MMSHPCVSLLGVPVLNPALVPHLAQGQVLLVSDPSPNTDPAKYSESTSATRHQMKGEDAQPQEMASTSFPRASGPSPEFRQHGDSDGKRGSPQNLPIEHHFACKECGDTFRLKVLLVQHQRVHSEEKGWECGDCGKVFRGVAEFNEHRKSHVAAEPQPGPSRALENAAEKREQMEREAKPFECEECGKRFKKNAGLSQHLRVHSREKPFDCEECGRSFKVNTHLFRHQKLHTSEKPFACKACSRDFLDRQELLKHQRMHTGHLPFDCDDCGKSFRGVNGLAEHQRIHSGAKPYGCPHCGKLFRRSSELTKHRRIHTGEKPYACGQCGKAFRQSSSLLEHARIHSGERPYACGECGKAFRGPSDLIKHRRIHSGLKPYECDKCGKAFRRSSGLSRHRRIHSGARRCECSQCGRVFKRRSALQKHQPTHHE</sequence>
<accession>Q9NSD4</accession>
<accession>A6NE92</accession>
<comment type="function">
    <text>May be involved in transcriptional regulation.</text>
</comment>
<comment type="interaction">
    <interactant intactId="EBI-17263125">
        <id>Q9NSD4</id>
    </interactant>
    <interactant intactId="EBI-742750">
        <id>Q8TBE0</id>
        <label>BAHD1</label>
    </interactant>
    <organismsDiffer>false</organismsDiffer>
    <experiments>3</experiments>
</comment>
<comment type="interaction">
    <interactant intactId="EBI-17263125">
        <id>Q9NSD4</id>
    </interactant>
    <interactant intactId="EBI-10172052">
        <id>P60411</id>
        <label>KRTAP10-9</label>
    </interactant>
    <organismsDiffer>false</organismsDiffer>
    <experiments>3</experiments>
</comment>
<comment type="interaction">
    <interactant intactId="EBI-17263125">
        <id>Q9NSD4</id>
    </interactant>
    <interactant intactId="EBI-2462365">
        <id>Q9H9Z2</id>
        <label>LIN28A</label>
    </interactant>
    <organismsDiffer>false</organismsDiffer>
    <experiments>3</experiments>
</comment>
<comment type="interaction">
    <interactant intactId="EBI-17263125">
        <id>Q9NSD4</id>
    </interactant>
    <interactant intactId="EBI-721525">
        <id>P98175</id>
        <label>RBM10</label>
    </interactant>
    <organismsDiffer>false</organismsDiffer>
    <experiments>3</experiments>
</comment>
<comment type="interaction">
    <interactant intactId="EBI-17263125">
        <id>Q9NSD4</id>
    </interactant>
    <interactant intactId="EBI-2340927">
        <id>P78317</id>
        <label>RNF4</label>
    </interactant>
    <organismsDiffer>false</organismsDiffer>
    <experiments>3</experiments>
</comment>
<comment type="interaction">
    <interactant intactId="EBI-17263125">
        <id>Q9NSD4</id>
    </interactant>
    <interactant intactId="EBI-3650647">
        <id>Q9BUZ4</id>
        <label>TRAF4</label>
    </interactant>
    <organismsDiffer>false</organismsDiffer>
    <experiments>3</experiments>
</comment>
<comment type="interaction">
    <interactant intactId="EBI-17263125">
        <id>Q9NSD4</id>
    </interactant>
    <interactant intactId="EBI-725997">
        <id>Q8WV44</id>
        <label>TRIM41</label>
    </interactant>
    <organismsDiffer>false</organismsDiffer>
    <experiments>6</experiments>
</comment>
<comment type="interaction">
    <interactant intactId="EBI-17263125">
        <id>Q9NSD4</id>
    </interactant>
    <interactant intactId="EBI-7233259">
        <id>Q86UD4</id>
        <label>ZNF329</label>
    </interactant>
    <organismsDiffer>false</organismsDiffer>
    <experiments>3</experiments>
</comment>
<comment type="interaction">
    <interactant intactId="EBI-17263125">
        <id>Q9NSD4</id>
    </interactant>
    <interactant intactId="EBI-11985915">
        <id>Q5T619</id>
        <label>ZNF648</label>
    </interactant>
    <organismsDiffer>false</organismsDiffer>
    <experiments>3</experiments>
</comment>
<comment type="interaction">
    <interactant intactId="EBI-17263125">
        <id>Q9NSD4</id>
    </interactant>
    <interactant intactId="EBI-10240849">
        <id>Q3KQV3</id>
        <label>ZNF792</label>
    </interactant>
    <organismsDiffer>false</organismsDiffer>
    <experiments>3</experiments>
</comment>
<comment type="interaction">
    <interactant intactId="EBI-17263125">
        <id>Q9NSD4</id>
    </interactant>
    <interactant intactId="EBI-11962574">
        <id>Q96EG3</id>
        <label>ZNF837</label>
    </interactant>
    <organismsDiffer>false</organismsDiffer>
    <experiments>3</experiments>
</comment>
<comment type="subcellular location">
    <subcellularLocation>
        <location evidence="4">Nucleus</location>
    </subcellularLocation>
</comment>
<comment type="alternative products">
    <event type="alternative splicing"/>
    <isoform>
        <id>Q9NSD4-1</id>
        <name>1</name>
        <sequence type="displayed"/>
    </isoform>
    <isoform>
        <id>Q9NSD4-2</id>
        <name>2</name>
        <sequence type="described" ref="VSP_055944"/>
    </isoform>
</comment>
<comment type="similarity">
    <text evidence="4">Belongs to the krueppel C2H2-type zinc-finger protein family.</text>
</comment>
<gene>
    <name type="primary">ZNF275</name>
</gene>
<reference key="1">
    <citation type="journal article" date="2000" name="Genome Res.">
        <title>Comparative genome sequence analysis of the Bpa/Str region in mouse and man.</title>
        <authorList>
            <person name="Mallon A.-M."/>
            <person name="Platzer M."/>
            <person name="Bate R."/>
            <person name="Gloeckner G."/>
            <person name="Botcherby M.R.M."/>
            <person name="Nordsiek G."/>
            <person name="Strivens M.A."/>
            <person name="Kioschis P."/>
            <person name="Dangel A."/>
            <person name="Cunningham D."/>
            <person name="Straw R.N.A."/>
            <person name="Weston P."/>
            <person name="Gilbert M."/>
            <person name="Fernando S."/>
            <person name="Goodall K."/>
            <person name="Hunter G."/>
            <person name="Greystrong J.S."/>
            <person name="Clarke D."/>
            <person name="Kimberley C."/>
            <person name="Goerdes M."/>
            <person name="Blechschmidt K."/>
            <person name="Rump A."/>
            <person name="Hinzmann B."/>
            <person name="Mundy C.R."/>
            <person name="Miller W."/>
            <person name="Poustka A."/>
            <person name="Herman G.E."/>
            <person name="Rhodes M."/>
            <person name="Denny P."/>
            <person name="Rosenthal A."/>
            <person name="Brown S.D.M."/>
        </authorList>
    </citation>
    <scope>NUCLEOTIDE SEQUENCE [LARGE SCALE GENOMIC DNA]</scope>
</reference>
<reference key="2">
    <citation type="journal article" date="2005" name="Nature">
        <title>The DNA sequence of the human X chromosome.</title>
        <authorList>
            <person name="Ross M.T."/>
            <person name="Grafham D.V."/>
            <person name="Coffey A.J."/>
            <person name="Scherer S."/>
            <person name="McLay K."/>
            <person name="Muzny D."/>
            <person name="Platzer M."/>
            <person name="Howell G.R."/>
            <person name="Burrows C."/>
            <person name="Bird C.P."/>
            <person name="Frankish A."/>
            <person name="Lovell F.L."/>
            <person name="Howe K.L."/>
            <person name="Ashurst J.L."/>
            <person name="Fulton R.S."/>
            <person name="Sudbrak R."/>
            <person name="Wen G."/>
            <person name="Jones M.C."/>
            <person name="Hurles M.E."/>
            <person name="Andrews T.D."/>
            <person name="Scott C.E."/>
            <person name="Searle S."/>
            <person name="Ramser J."/>
            <person name="Whittaker A."/>
            <person name="Deadman R."/>
            <person name="Carter N.P."/>
            <person name="Hunt S.E."/>
            <person name="Chen R."/>
            <person name="Cree A."/>
            <person name="Gunaratne P."/>
            <person name="Havlak P."/>
            <person name="Hodgson A."/>
            <person name="Metzker M.L."/>
            <person name="Richards S."/>
            <person name="Scott G."/>
            <person name="Steffen D."/>
            <person name="Sodergren E."/>
            <person name="Wheeler D.A."/>
            <person name="Worley K.C."/>
            <person name="Ainscough R."/>
            <person name="Ambrose K.D."/>
            <person name="Ansari-Lari M.A."/>
            <person name="Aradhya S."/>
            <person name="Ashwell R.I."/>
            <person name="Babbage A.K."/>
            <person name="Bagguley C.L."/>
            <person name="Ballabio A."/>
            <person name="Banerjee R."/>
            <person name="Barker G.E."/>
            <person name="Barlow K.F."/>
            <person name="Barrett I.P."/>
            <person name="Bates K.N."/>
            <person name="Beare D.M."/>
            <person name="Beasley H."/>
            <person name="Beasley O."/>
            <person name="Beck A."/>
            <person name="Bethel G."/>
            <person name="Blechschmidt K."/>
            <person name="Brady N."/>
            <person name="Bray-Allen S."/>
            <person name="Bridgeman A.M."/>
            <person name="Brown A.J."/>
            <person name="Brown M.J."/>
            <person name="Bonnin D."/>
            <person name="Bruford E.A."/>
            <person name="Buhay C."/>
            <person name="Burch P."/>
            <person name="Burford D."/>
            <person name="Burgess J."/>
            <person name="Burrill W."/>
            <person name="Burton J."/>
            <person name="Bye J.M."/>
            <person name="Carder C."/>
            <person name="Carrel L."/>
            <person name="Chako J."/>
            <person name="Chapman J.C."/>
            <person name="Chavez D."/>
            <person name="Chen E."/>
            <person name="Chen G."/>
            <person name="Chen Y."/>
            <person name="Chen Z."/>
            <person name="Chinault C."/>
            <person name="Ciccodicola A."/>
            <person name="Clark S.Y."/>
            <person name="Clarke G."/>
            <person name="Clee C.M."/>
            <person name="Clegg S."/>
            <person name="Clerc-Blankenburg K."/>
            <person name="Clifford K."/>
            <person name="Cobley V."/>
            <person name="Cole C.G."/>
            <person name="Conquer J.S."/>
            <person name="Corby N."/>
            <person name="Connor R.E."/>
            <person name="David R."/>
            <person name="Davies J."/>
            <person name="Davis C."/>
            <person name="Davis J."/>
            <person name="Delgado O."/>
            <person name="Deshazo D."/>
            <person name="Dhami P."/>
            <person name="Ding Y."/>
            <person name="Dinh H."/>
            <person name="Dodsworth S."/>
            <person name="Draper H."/>
            <person name="Dugan-Rocha S."/>
            <person name="Dunham A."/>
            <person name="Dunn M."/>
            <person name="Durbin K.J."/>
            <person name="Dutta I."/>
            <person name="Eades T."/>
            <person name="Ellwood M."/>
            <person name="Emery-Cohen A."/>
            <person name="Errington H."/>
            <person name="Evans K.L."/>
            <person name="Faulkner L."/>
            <person name="Francis F."/>
            <person name="Frankland J."/>
            <person name="Fraser A.E."/>
            <person name="Galgoczy P."/>
            <person name="Gilbert J."/>
            <person name="Gill R."/>
            <person name="Gloeckner G."/>
            <person name="Gregory S.G."/>
            <person name="Gribble S."/>
            <person name="Griffiths C."/>
            <person name="Grocock R."/>
            <person name="Gu Y."/>
            <person name="Gwilliam R."/>
            <person name="Hamilton C."/>
            <person name="Hart E.A."/>
            <person name="Hawes A."/>
            <person name="Heath P.D."/>
            <person name="Heitmann K."/>
            <person name="Hennig S."/>
            <person name="Hernandez J."/>
            <person name="Hinzmann B."/>
            <person name="Ho S."/>
            <person name="Hoffs M."/>
            <person name="Howden P.J."/>
            <person name="Huckle E.J."/>
            <person name="Hume J."/>
            <person name="Hunt P.J."/>
            <person name="Hunt A.R."/>
            <person name="Isherwood J."/>
            <person name="Jacob L."/>
            <person name="Johnson D."/>
            <person name="Jones S."/>
            <person name="de Jong P.J."/>
            <person name="Joseph S.S."/>
            <person name="Keenan S."/>
            <person name="Kelly S."/>
            <person name="Kershaw J.K."/>
            <person name="Khan Z."/>
            <person name="Kioschis P."/>
            <person name="Klages S."/>
            <person name="Knights A.J."/>
            <person name="Kosiura A."/>
            <person name="Kovar-Smith C."/>
            <person name="Laird G.K."/>
            <person name="Langford C."/>
            <person name="Lawlor S."/>
            <person name="Leversha M."/>
            <person name="Lewis L."/>
            <person name="Liu W."/>
            <person name="Lloyd C."/>
            <person name="Lloyd D.M."/>
            <person name="Loulseged H."/>
            <person name="Loveland J.E."/>
            <person name="Lovell J.D."/>
            <person name="Lozado R."/>
            <person name="Lu J."/>
            <person name="Lyne R."/>
            <person name="Ma J."/>
            <person name="Maheshwari M."/>
            <person name="Matthews L.H."/>
            <person name="McDowall J."/>
            <person name="McLaren S."/>
            <person name="McMurray A."/>
            <person name="Meidl P."/>
            <person name="Meitinger T."/>
            <person name="Milne S."/>
            <person name="Miner G."/>
            <person name="Mistry S.L."/>
            <person name="Morgan M."/>
            <person name="Morris S."/>
            <person name="Mueller I."/>
            <person name="Mullikin J.C."/>
            <person name="Nguyen N."/>
            <person name="Nordsiek G."/>
            <person name="Nyakatura G."/>
            <person name="O'dell C.N."/>
            <person name="Okwuonu G."/>
            <person name="Palmer S."/>
            <person name="Pandian R."/>
            <person name="Parker D."/>
            <person name="Parrish J."/>
            <person name="Pasternak S."/>
            <person name="Patel D."/>
            <person name="Pearce A.V."/>
            <person name="Pearson D.M."/>
            <person name="Pelan S.E."/>
            <person name="Perez L."/>
            <person name="Porter K.M."/>
            <person name="Ramsey Y."/>
            <person name="Reichwald K."/>
            <person name="Rhodes S."/>
            <person name="Ridler K.A."/>
            <person name="Schlessinger D."/>
            <person name="Schueler M.G."/>
            <person name="Sehra H.K."/>
            <person name="Shaw-Smith C."/>
            <person name="Shen H."/>
            <person name="Sheridan E.M."/>
            <person name="Shownkeen R."/>
            <person name="Skuce C.D."/>
            <person name="Smith M.L."/>
            <person name="Sotheran E.C."/>
            <person name="Steingruber H.E."/>
            <person name="Steward C.A."/>
            <person name="Storey R."/>
            <person name="Swann R.M."/>
            <person name="Swarbreck D."/>
            <person name="Tabor P.E."/>
            <person name="Taudien S."/>
            <person name="Taylor T."/>
            <person name="Teague B."/>
            <person name="Thomas K."/>
            <person name="Thorpe A."/>
            <person name="Timms K."/>
            <person name="Tracey A."/>
            <person name="Trevanion S."/>
            <person name="Tromans A.C."/>
            <person name="d'Urso M."/>
            <person name="Verduzco D."/>
            <person name="Villasana D."/>
            <person name="Waldron L."/>
            <person name="Wall M."/>
            <person name="Wang Q."/>
            <person name="Warren J."/>
            <person name="Warry G.L."/>
            <person name="Wei X."/>
            <person name="West A."/>
            <person name="Whitehead S.L."/>
            <person name="Whiteley M.N."/>
            <person name="Wilkinson J.E."/>
            <person name="Willey D.L."/>
            <person name="Williams G."/>
            <person name="Williams L."/>
            <person name="Williamson A."/>
            <person name="Williamson H."/>
            <person name="Wilming L."/>
            <person name="Woodmansey R.L."/>
            <person name="Wray P.W."/>
            <person name="Yen J."/>
            <person name="Zhang J."/>
            <person name="Zhou J."/>
            <person name="Zoghbi H."/>
            <person name="Zorilla S."/>
            <person name="Buck D."/>
            <person name="Reinhardt R."/>
            <person name="Poustka A."/>
            <person name="Rosenthal A."/>
            <person name="Lehrach H."/>
            <person name="Meindl A."/>
            <person name="Minx P.J."/>
            <person name="Hillier L.W."/>
            <person name="Willard H.F."/>
            <person name="Wilson R.K."/>
            <person name="Waterston R.H."/>
            <person name="Rice C.M."/>
            <person name="Vaudin M."/>
            <person name="Coulson A."/>
            <person name="Nelson D.L."/>
            <person name="Weinstock G."/>
            <person name="Sulston J.E."/>
            <person name="Durbin R.M."/>
            <person name="Hubbard T."/>
            <person name="Gibbs R.A."/>
            <person name="Beck S."/>
            <person name="Rogers J."/>
            <person name="Bentley D.R."/>
        </authorList>
    </citation>
    <scope>NUCLEOTIDE SEQUENCE [LARGE SCALE GENOMIC DNA]</scope>
</reference>
<reference key="3">
    <citation type="submission" date="2005-09" db="EMBL/GenBank/DDBJ databases">
        <authorList>
            <person name="Mural R.J."/>
            <person name="Istrail S."/>
            <person name="Sutton G."/>
            <person name="Florea L."/>
            <person name="Halpern A.L."/>
            <person name="Mobarry C.M."/>
            <person name="Lippert R."/>
            <person name="Walenz B."/>
            <person name="Shatkay H."/>
            <person name="Dew I."/>
            <person name="Miller J.R."/>
            <person name="Flanigan M.J."/>
            <person name="Edwards N.J."/>
            <person name="Bolanos R."/>
            <person name="Fasulo D."/>
            <person name="Halldorsson B.V."/>
            <person name="Hannenhalli S."/>
            <person name="Turner R."/>
            <person name="Yooseph S."/>
            <person name="Lu F."/>
            <person name="Nusskern D.R."/>
            <person name="Shue B.C."/>
            <person name="Zheng X.H."/>
            <person name="Zhong F."/>
            <person name="Delcher A.L."/>
            <person name="Huson D.H."/>
            <person name="Kravitz S.A."/>
            <person name="Mouchard L."/>
            <person name="Reinert K."/>
            <person name="Remington K.A."/>
            <person name="Clark A.G."/>
            <person name="Waterman M.S."/>
            <person name="Eichler E.E."/>
            <person name="Adams M.D."/>
            <person name="Hunkapiller M.W."/>
            <person name="Myers E.W."/>
            <person name="Venter J.C."/>
        </authorList>
    </citation>
    <scope>NUCLEOTIDE SEQUENCE [LARGE SCALE GENOMIC DNA]</scope>
</reference>
<reference key="4">
    <citation type="journal article" date="2004" name="Genome Res.">
        <title>The status, quality, and expansion of the NIH full-length cDNA project: the Mammalian Gene Collection (MGC).</title>
        <authorList>
            <consortium name="The MGC Project Team"/>
        </authorList>
    </citation>
    <scope>NUCLEOTIDE SEQUENCE [LARGE SCALE MRNA] (ISOFORM 2)</scope>
    <source>
        <tissue>Testis</tissue>
    </source>
</reference>
<reference key="5">
    <citation type="journal article" date="2013" name="J. Proteome Res.">
        <title>Toward a comprehensive characterization of a human cancer cell phosphoproteome.</title>
        <authorList>
            <person name="Zhou H."/>
            <person name="Di Palma S."/>
            <person name="Preisinger C."/>
            <person name="Peng M."/>
            <person name="Polat A.N."/>
            <person name="Heck A.J."/>
            <person name="Mohammed S."/>
        </authorList>
    </citation>
    <scope>PHOSPHORYLATION [LARGE SCALE ANALYSIS] AT SER-76</scope>
    <scope>IDENTIFICATION BY MASS SPECTROMETRY [LARGE SCALE ANALYSIS]</scope>
    <source>
        <tissue>Cervix carcinoma</tissue>
        <tissue>Erythroleukemia</tissue>
    </source>
</reference>
<keyword id="KW-0025">Alternative splicing</keyword>
<keyword id="KW-0238">DNA-binding</keyword>
<keyword id="KW-0479">Metal-binding</keyword>
<keyword id="KW-0539">Nucleus</keyword>
<keyword id="KW-0597">Phosphoprotein</keyword>
<keyword id="KW-1267">Proteomics identification</keyword>
<keyword id="KW-1185">Reference proteome</keyword>
<keyword id="KW-0677">Repeat</keyword>
<keyword id="KW-0678">Repressor</keyword>
<keyword id="KW-0804">Transcription</keyword>
<keyword id="KW-0805">Transcription regulation</keyword>
<keyword id="KW-0862">Zinc</keyword>
<keyword id="KW-0863">Zinc-finger</keyword>
<organism>
    <name type="scientific">Homo sapiens</name>
    <name type="common">Human</name>
    <dbReference type="NCBI Taxonomy" id="9606"/>
    <lineage>
        <taxon>Eukaryota</taxon>
        <taxon>Metazoa</taxon>
        <taxon>Chordata</taxon>
        <taxon>Craniata</taxon>
        <taxon>Vertebrata</taxon>
        <taxon>Euteleostomi</taxon>
        <taxon>Mammalia</taxon>
        <taxon>Eutheria</taxon>
        <taxon>Euarchontoglires</taxon>
        <taxon>Primates</taxon>
        <taxon>Haplorrhini</taxon>
        <taxon>Catarrhini</taxon>
        <taxon>Hominidae</taxon>
        <taxon>Homo</taxon>
    </lineage>
</organism>
<evidence type="ECO:0000255" key="1">
    <source>
        <dbReference type="PROSITE-ProRule" id="PRU00042"/>
    </source>
</evidence>
<evidence type="ECO:0000256" key="2">
    <source>
        <dbReference type="SAM" id="MobiDB-lite"/>
    </source>
</evidence>
<evidence type="ECO:0000303" key="3">
    <source>
    </source>
</evidence>
<evidence type="ECO:0000305" key="4"/>
<evidence type="ECO:0007744" key="5">
    <source>
    </source>
</evidence>
<proteinExistence type="evidence at protein level"/>
<name>ZN275_HUMAN</name>
<dbReference type="EMBL" id="U82670">
    <property type="status" value="NOT_ANNOTATED_CDS"/>
    <property type="molecule type" value="Genomic_DNA"/>
</dbReference>
<dbReference type="EMBL" id="AC152007">
    <property type="status" value="NOT_ANNOTATED_CDS"/>
    <property type="molecule type" value="Genomic_DNA"/>
</dbReference>
<dbReference type="EMBL" id="AC152008">
    <property type="status" value="NOT_ANNOTATED_CDS"/>
    <property type="molecule type" value="Genomic_DNA"/>
</dbReference>
<dbReference type="EMBL" id="CH471172">
    <property type="protein sequence ID" value="EAW72883.1"/>
    <property type="molecule type" value="Genomic_DNA"/>
</dbReference>
<dbReference type="EMBL" id="BC136634">
    <property type="protein sequence ID" value="AAI36635.1"/>
    <property type="molecule type" value="mRNA"/>
</dbReference>
<dbReference type="CCDS" id="CCDS94693.1">
    <molecule id="Q9NSD4-1"/>
</dbReference>
<dbReference type="RefSeq" id="NP_001354686.1">
    <molecule id="Q9NSD4-1"/>
    <property type="nucleotide sequence ID" value="NM_001367757.1"/>
</dbReference>
<dbReference type="SMR" id="Q9NSD4"/>
<dbReference type="BioGRID" id="116051">
    <property type="interactions" value="22"/>
</dbReference>
<dbReference type="FunCoup" id="Q9NSD4">
    <property type="interactions" value="66"/>
</dbReference>
<dbReference type="IntAct" id="Q9NSD4">
    <property type="interactions" value="12"/>
</dbReference>
<dbReference type="STRING" id="9606.ENSP00000359271"/>
<dbReference type="GlyGen" id="Q9NSD4">
    <property type="glycosylation" value="1 site, 1 O-linked glycan (1 site)"/>
</dbReference>
<dbReference type="iPTMnet" id="Q9NSD4"/>
<dbReference type="PhosphoSitePlus" id="Q9NSD4"/>
<dbReference type="BioMuta" id="ZNF275"/>
<dbReference type="DMDM" id="308153531"/>
<dbReference type="jPOST" id="Q9NSD4"/>
<dbReference type="MassIVE" id="Q9NSD4"/>
<dbReference type="PaxDb" id="9606-ENSP00000359271"/>
<dbReference type="PeptideAtlas" id="Q9NSD4"/>
<dbReference type="ProteomicsDB" id="82534">
    <molecule id="Q9NSD4-1"/>
</dbReference>
<dbReference type="ProteomicsDB" id="969"/>
<dbReference type="Antibodypedia" id="407">
    <property type="antibodies" value="70 antibodies from 12 providers"/>
</dbReference>
<dbReference type="Ensembl" id="ENST00000370249.3">
    <molecule id="Q9NSD4-2"/>
    <property type="protein sequence ID" value="ENSP00000359269.2"/>
    <property type="gene ID" value="ENSG00000063587.15"/>
</dbReference>
<dbReference type="Ensembl" id="ENST00000650114.2">
    <molecule id="Q9NSD4-1"/>
    <property type="protein sequence ID" value="ENSP00000496975.2"/>
    <property type="gene ID" value="ENSG00000063587.15"/>
</dbReference>
<dbReference type="GeneID" id="10838"/>
<dbReference type="MANE-Select" id="ENST00000650114.2">
    <property type="protein sequence ID" value="ENSP00000496975.2"/>
    <property type="RefSeq nucleotide sequence ID" value="NM_001367757.1"/>
    <property type="RefSeq protein sequence ID" value="NP_001354686.1"/>
</dbReference>
<dbReference type="UCSC" id="uc065bsr.1">
    <molecule id="Q9NSD4-1"/>
    <property type="organism name" value="human"/>
</dbReference>
<dbReference type="AGR" id="HGNC:13069"/>
<dbReference type="GeneCards" id="ZNF275"/>
<dbReference type="HGNC" id="HGNC:13069">
    <property type="gene designation" value="ZNF275"/>
</dbReference>
<dbReference type="HPA" id="ENSG00000063587">
    <property type="expression patterns" value="Tissue enhanced (adrenal)"/>
</dbReference>
<dbReference type="neXtProt" id="NX_Q9NSD4"/>
<dbReference type="OpenTargets" id="ENSG00000063587"/>
<dbReference type="VEuPathDB" id="HostDB:ENSG00000063587"/>
<dbReference type="eggNOG" id="KOG1721">
    <property type="taxonomic scope" value="Eukaryota"/>
</dbReference>
<dbReference type="GeneTree" id="ENSGT00940000153582"/>
<dbReference type="HOGENOM" id="CLU_002678_93_1_1"/>
<dbReference type="InParanoid" id="Q9NSD4"/>
<dbReference type="OMA" id="MPFECEE"/>
<dbReference type="OrthoDB" id="6077919at2759"/>
<dbReference type="PAN-GO" id="Q9NSD4">
    <property type="GO annotations" value="3 GO annotations based on evolutionary models"/>
</dbReference>
<dbReference type="PhylomeDB" id="Q9NSD4"/>
<dbReference type="PathwayCommons" id="Q9NSD4"/>
<dbReference type="SignaLink" id="Q9NSD4"/>
<dbReference type="ChiTaRS" id="ZNF275">
    <property type="organism name" value="human"/>
</dbReference>
<dbReference type="Pharos" id="Q9NSD4">
    <property type="development level" value="Tdark"/>
</dbReference>
<dbReference type="PRO" id="PR:Q9NSD4"/>
<dbReference type="Proteomes" id="UP000005640">
    <property type="component" value="Chromosome X"/>
</dbReference>
<dbReference type="RNAct" id="Q9NSD4">
    <property type="molecule type" value="protein"/>
</dbReference>
<dbReference type="Bgee" id="ENSG00000063587">
    <property type="expression patterns" value="Expressed in adrenal cortex and 186 other cell types or tissues"/>
</dbReference>
<dbReference type="ExpressionAtlas" id="Q9NSD4">
    <property type="expression patterns" value="baseline and differential"/>
</dbReference>
<dbReference type="GO" id="GO:0005634">
    <property type="term" value="C:nucleus"/>
    <property type="evidence" value="ECO:0007669"/>
    <property type="project" value="UniProtKB-SubCell"/>
</dbReference>
<dbReference type="GO" id="GO:0000981">
    <property type="term" value="F:DNA-binding transcription factor activity, RNA polymerase II-specific"/>
    <property type="evidence" value="ECO:0000318"/>
    <property type="project" value="GO_Central"/>
</dbReference>
<dbReference type="GO" id="GO:0000978">
    <property type="term" value="F:RNA polymerase II cis-regulatory region sequence-specific DNA binding"/>
    <property type="evidence" value="ECO:0000318"/>
    <property type="project" value="GO_Central"/>
</dbReference>
<dbReference type="GO" id="GO:0008270">
    <property type="term" value="F:zinc ion binding"/>
    <property type="evidence" value="ECO:0007669"/>
    <property type="project" value="UniProtKB-KW"/>
</dbReference>
<dbReference type="GO" id="GO:0006357">
    <property type="term" value="P:regulation of transcription by RNA polymerase II"/>
    <property type="evidence" value="ECO:0000318"/>
    <property type="project" value="GO_Central"/>
</dbReference>
<dbReference type="FunFam" id="3.30.160.60:FF:000987">
    <property type="entry name" value="Zinc finger protein 275"/>
    <property type="match status" value="1"/>
</dbReference>
<dbReference type="FunFam" id="3.30.160.60:FF:001457">
    <property type="entry name" value="Zinc finger protein 275"/>
    <property type="match status" value="1"/>
</dbReference>
<dbReference type="FunFam" id="3.30.160.60:FF:001497">
    <property type="entry name" value="Zinc finger protein 275"/>
    <property type="match status" value="1"/>
</dbReference>
<dbReference type="FunFam" id="3.30.160.60:FF:001726">
    <property type="entry name" value="Zinc finger protein 275"/>
    <property type="match status" value="1"/>
</dbReference>
<dbReference type="FunFam" id="3.30.160.60:FF:001817">
    <property type="entry name" value="Zinc finger protein 275"/>
    <property type="match status" value="1"/>
</dbReference>
<dbReference type="FunFam" id="3.30.160.60:FF:001533">
    <property type="entry name" value="zinc finger protein 275"/>
    <property type="match status" value="1"/>
</dbReference>
<dbReference type="FunFam" id="3.30.160.60:FF:000185">
    <property type="entry name" value="zinc finger protein 319"/>
    <property type="match status" value="1"/>
</dbReference>
<dbReference type="FunFam" id="3.30.160.60:FF:000690">
    <property type="entry name" value="Zinc finger protein 354C"/>
    <property type="match status" value="1"/>
</dbReference>
<dbReference type="FunFam" id="3.30.160.60:FF:000060">
    <property type="entry name" value="zinc finger protein 436"/>
    <property type="match status" value="1"/>
</dbReference>
<dbReference type="FunFam" id="3.30.160.60:FF:000773">
    <property type="entry name" value="Zinc finger protein 44"/>
    <property type="match status" value="1"/>
</dbReference>
<dbReference type="Gene3D" id="3.30.160.60">
    <property type="entry name" value="Classic Zinc Finger"/>
    <property type="match status" value="11"/>
</dbReference>
<dbReference type="InterPro" id="IPR050758">
    <property type="entry name" value="Znf_C2H2-type"/>
</dbReference>
<dbReference type="InterPro" id="IPR036236">
    <property type="entry name" value="Znf_C2H2_sf"/>
</dbReference>
<dbReference type="InterPro" id="IPR013087">
    <property type="entry name" value="Znf_C2H2_type"/>
</dbReference>
<dbReference type="PANTHER" id="PTHR23234:SF8">
    <property type="entry name" value="C2H2-TYPE DOMAIN-CONTAINING PROTEIN"/>
    <property type="match status" value="1"/>
</dbReference>
<dbReference type="PANTHER" id="PTHR23234">
    <property type="entry name" value="ZNF44 PROTEIN"/>
    <property type="match status" value="1"/>
</dbReference>
<dbReference type="Pfam" id="PF00096">
    <property type="entry name" value="zf-C2H2"/>
    <property type="match status" value="10"/>
</dbReference>
<dbReference type="SMART" id="SM00355">
    <property type="entry name" value="ZnF_C2H2"/>
    <property type="match status" value="11"/>
</dbReference>
<dbReference type="SUPFAM" id="SSF57667">
    <property type="entry name" value="beta-beta-alpha zinc fingers"/>
    <property type="match status" value="6"/>
</dbReference>
<dbReference type="PROSITE" id="PS00028">
    <property type="entry name" value="ZINC_FINGER_C2H2_1"/>
    <property type="match status" value="11"/>
</dbReference>
<dbReference type="PROSITE" id="PS50157">
    <property type="entry name" value="ZINC_FINGER_C2H2_2"/>
    <property type="match status" value="11"/>
</dbReference>
<feature type="chain" id="PRO_0000047502" description="Zinc finger protein 275">
    <location>
        <begin position="1"/>
        <end position="429"/>
    </location>
</feature>
<feature type="zinc finger region" description="C2H2-type 1" evidence="1">
    <location>
        <begin position="101"/>
        <end position="123"/>
    </location>
</feature>
<feature type="zinc finger region" description="C2H2-type 2" evidence="1">
    <location>
        <begin position="129"/>
        <end position="151"/>
    </location>
</feature>
<feature type="zinc finger region" description="C2H2-type 3" evidence="1">
    <location>
        <begin position="181"/>
        <end position="203"/>
    </location>
</feature>
<feature type="zinc finger region" description="C2H2-type 4" evidence="1">
    <location>
        <begin position="209"/>
        <end position="231"/>
    </location>
</feature>
<feature type="zinc finger region" description="C2H2-type 5" evidence="1">
    <location>
        <begin position="237"/>
        <end position="259"/>
    </location>
</feature>
<feature type="zinc finger region" description="C2H2-type 6" evidence="1">
    <location>
        <begin position="265"/>
        <end position="287"/>
    </location>
</feature>
<feature type="zinc finger region" description="C2H2-type 7" evidence="1">
    <location>
        <begin position="293"/>
        <end position="315"/>
    </location>
</feature>
<feature type="zinc finger region" description="C2H2-type 8" evidence="1">
    <location>
        <begin position="321"/>
        <end position="343"/>
    </location>
</feature>
<feature type="zinc finger region" description="C2H2-type 9" evidence="1">
    <location>
        <begin position="349"/>
        <end position="371"/>
    </location>
</feature>
<feature type="zinc finger region" description="C2H2-type 10" evidence="1">
    <location>
        <begin position="377"/>
        <end position="399"/>
    </location>
</feature>
<feature type="zinc finger region" description="C2H2-type 11" evidence="1">
    <location>
        <begin position="405"/>
        <end position="427"/>
    </location>
</feature>
<feature type="region of interest" description="Disordered" evidence="2">
    <location>
        <begin position="31"/>
        <end position="95"/>
    </location>
</feature>
<feature type="region of interest" description="Disordered" evidence="2">
    <location>
        <begin position="149"/>
        <end position="176"/>
    </location>
</feature>
<feature type="compositionally biased region" description="Polar residues" evidence="2">
    <location>
        <begin position="34"/>
        <end position="51"/>
    </location>
</feature>
<feature type="compositionally biased region" description="Basic and acidic residues" evidence="2">
    <location>
        <begin position="79"/>
        <end position="89"/>
    </location>
</feature>
<feature type="compositionally biased region" description="Basic and acidic residues" evidence="2">
    <location>
        <begin position="167"/>
        <end position="176"/>
    </location>
</feature>
<feature type="modified residue" description="Phosphoserine" evidence="5">
    <location>
        <position position="76"/>
    </location>
</feature>
<feature type="splice variant" id="VSP_055944" description="In isoform 2." evidence="3">
    <location>
        <begin position="1"/>
        <end position="53"/>
    </location>
</feature>